<comment type="function">
    <text evidence="1">Ligates lysine onto the cytidine present at position 34 of the AUA codon-specific tRNA(Ile) that contains the anticodon CAU, in an ATP-dependent manner. Cytidine is converted to lysidine, thus changing the amino acid specificity of the tRNA from methionine to isoleucine.</text>
</comment>
<comment type="catalytic activity">
    <reaction evidence="1">
        <text>cytidine(34) in tRNA(Ile2) + L-lysine + ATP = lysidine(34) in tRNA(Ile2) + AMP + diphosphate + H(+)</text>
        <dbReference type="Rhea" id="RHEA:43744"/>
        <dbReference type="Rhea" id="RHEA-COMP:10625"/>
        <dbReference type="Rhea" id="RHEA-COMP:10670"/>
        <dbReference type="ChEBI" id="CHEBI:15378"/>
        <dbReference type="ChEBI" id="CHEBI:30616"/>
        <dbReference type="ChEBI" id="CHEBI:32551"/>
        <dbReference type="ChEBI" id="CHEBI:33019"/>
        <dbReference type="ChEBI" id="CHEBI:82748"/>
        <dbReference type="ChEBI" id="CHEBI:83665"/>
        <dbReference type="ChEBI" id="CHEBI:456215"/>
        <dbReference type="EC" id="6.3.4.19"/>
    </reaction>
</comment>
<comment type="subcellular location">
    <subcellularLocation>
        <location evidence="1">Cytoplasm</location>
    </subcellularLocation>
</comment>
<comment type="domain">
    <text>The N-terminal region contains the highly conserved SGGXDS motif, predicted to be a P-loop motif involved in ATP binding.</text>
</comment>
<comment type="similarity">
    <text evidence="1">Belongs to the tRNA(Ile)-lysidine synthase family.</text>
</comment>
<name>TILS_NOCFA</name>
<sequence>MLRHAVRGWLAEHLPGAAPAVAVALSGGADSLALTAAAVVEAATVDALVVDHGLQPGSDAVAVAAAAQARTLGCRSARVLRVRVGSDGGLEAAAREARYAALGSARAGLPVLLGHTLDDQAETVLLGLARGSGARSIRGMAAYTPPWGRPLLGVRRADTRRLCADLGLTPHEDPHNRSAEFTRVRLRTEVLPLLEDVLGGGVAEALARTGRQLREDGAVLDALAADLASAAADAGDLRIETLATAPAALRRRAVRAWLLDSGAKAPTDRQLRAIDALVTAWRGQGGVAVGGGTPGMRLVAARERGRLTLRRQARSPAR</sequence>
<feature type="chain" id="PRO_0000181736" description="tRNA(Ile)-lysidine synthase">
    <location>
        <begin position="1"/>
        <end position="318"/>
    </location>
</feature>
<feature type="binding site" evidence="1">
    <location>
        <begin position="26"/>
        <end position="31"/>
    </location>
    <ligand>
        <name>ATP</name>
        <dbReference type="ChEBI" id="CHEBI:30616"/>
    </ligand>
</feature>
<proteinExistence type="inferred from homology"/>
<protein>
    <recommendedName>
        <fullName evidence="1">tRNA(Ile)-lysidine synthase</fullName>
        <ecNumber evidence="1">6.3.4.19</ecNumber>
    </recommendedName>
    <alternativeName>
        <fullName evidence="1">tRNA(Ile)-2-lysyl-cytidine synthase</fullName>
    </alternativeName>
    <alternativeName>
        <fullName evidence="1">tRNA(Ile)-lysidine synthetase</fullName>
    </alternativeName>
</protein>
<evidence type="ECO:0000255" key="1">
    <source>
        <dbReference type="HAMAP-Rule" id="MF_01161"/>
    </source>
</evidence>
<gene>
    <name evidence="1" type="primary">tilS</name>
    <name type="ordered locus">NFA_3880</name>
</gene>
<reference key="1">
    <citation type="journal article" date="2004" name="Proc. Natl. Acad. Sci. U.S.A.">
        <title>The complete genomic sequence of Nocardia farcinica IFM 10152.</title>
        <authorList>
            <person name="Ishikawa J."/>
            <person name="Yamashita A."/>
            <person name="Mikami Y."/>
            <person name="Hoshino Y."/>
            <person name="Kurita H."/>
            <person name="Hotta K."/>
            <person name="Shiba T."/>
            <person name="Hattori M."/>
        </authorList>
    </citation>
    <scope>NUCLEOTIDE SEQUENCE [LARGE SCALE GENOMIC DNA]</scope>
    <source>
        <strain>IFM 10152</strain>
    </source>
</reference>
<organism>
    <name type="scientific">Nocardia farcinica (strain IFM 10152)</name>
    <dbReference type="NCBI Taxonomy" id="247156"/>
    <lineage>
        <taxon>Bacteria</taxon>
        <taxon>Bacillati</taxon>
        <taxon>Actinomycetota</taxon>
        <taxon>Actinomycetes</taxon>
        <taxon>Mycobacteriales</taxon>
        <taxon>Nocardiaceae</taxon>
        <taxon>Nocardia</taxon>
    </lineage>
</organism>
<keyword id="KW-0067">ATP-binding</keyword>
<keyword id="KW-0963">Cytoplasm</keyword>
<keyword id="KW-0436">Ligase</keyword>
<keyword id="KW-0547">Nucleotide-binding</keyword>
<keyword id="KW-1185">Reference proteome</keyword>
<keyword id="KW-0819">tRNA processing</keyword>
<dbReference type="EC" id="6.3.4.19" evidence="1"/>
<dbReference type="EMBL" id="AP006618">
    <property type="protein sequence ID" value="BAD55230.1"/>
    <property type="molecule type" value="Genomic_DNA"/>
</dbReference>
<dbReference type="SMR" id="Q5Z2W1"/>
<dbReference type="STRING" id="247156.NFA_3880"/>
<dbReference type="KEGG" id="nfa:NFA_3880"/>
<dbReference type="eggNOG" id="COG0037">
    <property type="taxonomic scope" value="Bacteria"/>
</dbReference>
<dbReference type="HOGENOM" id="CLU_018869_1_1_11"/>
<dbReference type="Proteomes" id="UP000006820">
    <property type="component" value="Chromosome"/>
</dbReference>
<dbReference type="GO" id="GO:0005737">
    <property type="term" value="C:cytoplasm"/>
    <property type="evidence" value="ECO:0007669"/>
    <property type="project" value="UniProtKB-SubCell"/>
</dbReference>
<dbReference type="GO" id="GO:0005524">
    <property type="term" value="F:ATP binding"/>
    <property type="evidence" value="ECO:0007669"/>
    <property type="project" value="UniProtKB-UniRule"/>
</dbReference>
<dbReference type="GO" id="GO:0032267">
    <property type="term" value="F:tRNA(Ile)-lysidine synthase activity"/>
    <property type="evidence" value="ECO:0007669"/>
    <property type="project" value="UniProtKB-EC"/>
</dbReference>
<dbReference type="GO" id="GO:0006400">
    <property type="term" value="P:tRNA modification"/>
    <property type="evidence" value="ECO:0007669"/>
    <property type="project" value="UniProtKB-UniRule"/>
</dbReference>
<dbReference type="CDD" id="cd01992">
    <property type="entry name" value="TilS_N"/>
    <property type="match status" value="1"/>
</dbReference>
<dbReference type="Gene3D" id="1.20.59.20">
    <property type="match status" value="1"/>
</dbReference>
<dbReference type="Gene3D" id="3.40.50.620">
    <property type="entry name" value="HUPs"/>
    <property type="match status" value="1"/>
</dbReference>
<dbReference type="HAMAP" id="MF_01161">
    <property type="entry name" value="tRNA_Ile_lys_synt"/>
    <property type="match status" value="1"/>
</dbReference>
<dbReference type="InterPro" id="IPR014729">
    <property type="entry name" value="Rossmann-like_a/b/a_fold"/>
</dbReference>
<dbReference type="InterPro" id="IPR011063">
    <property type="entry name" value="TilS/TtcA_N"/>
</dbReference>
<dbReference type="InterPro" id="IPR012094">
    <property type="entry name" value="tRNA_Ile_lys_synt"/>
</dbReference>
<dbReference type="InterPro" id="IPR012795">
    <property type="entry name" value="tRNA_Ile_lys_synt_N"/>
</dbReference>
<dbReference type="InterPro" id="IPR015262">
    <property type="entry name" value="tRNA_Ile_lys_synt_subst-bd"/>
</dbReference>
<dbReference type="NCBIfam" id="TIGR02432">
    <property type="entry name" value="lysidine_TilS_N"/>
    <property type="match status" value="1"/>
</dbReference>
<dbReference type="PANTHER" id="PTHR43033">
    <property type="entry name" value="TRNA(ILE)-LYSIDINE SYNTHASE-RELATED"/>
    <property type="match status" value="1"/>
</dbReference>
<dbReference type="PANTHER" id="PTHR43033:SF1">
    <property type="entry name" value="TRNA(ILE)-LYSIDINE SYNTHASE-RELATED"/>
    <property type="match status" value="1"/>
</dbReference>
<dbReference type="Pfam" id="PF01171">
    <property type="entry name" value="ATP_bind_3"/>
    <property type="match status" value="1"/>
</dbReference>
<dbReference type="Pfam" id="PF09179">
    <property type="entry name" value="TilS"/>
    <property type="match status" value="1"/>
</dbReference>
<dbReference type="SUPFAM" id="SSF52402">
    <property type="entry name" value="Adenine nucleotide alpha hydrolases-like"/>
    <property type="match status" value="1"/>
</dbReference>
<dbReference type="SUPFAM" id="SSF82829">
    <property type="entry name" value="MesJ substrate recognition domain-like"/>
    <property type="match status" value="1"/>
</dbReference>
<accession>Q5Z2W1</accession>